<evidence type="ECO:0000255" key="1">
    <source>
        <dbReference type="HAMAP-Rule" id="MF_00031"/>
    </source>
</evidence>
<feature type="chain" id="PRO_1000002383" description="Holliday junction branch migration complex subunit RuvA">
    <location>
        <begin position="1"/>
        <end position="196"/>
    </location>
</feature>
<feature type="region of interest" description="Domain I" evidence="1">
    <location>
        <begin position="1"/>
        <end position="63"/>
    </location>
</feature>
<feature type="region of interest" description="Domain II" evidence="1">
    <location>
        <begin position="64"/>
        <end position="136"/>
    </location>
</feature>
<feature type="region of interest" description="Flexible linker" evidence="1">
    <location>
        <begin position="136"/>
        <end position="140"/>
    </location>
</feature>
<feature type="region of interest" description="Domain III" evidence="1">
    <location>
        <begin position="141"/>
        <end position="196"/>
    </location>
</feature>
<gene>
    <name evidence="1" type="primary">ruvA</name>
    <name type="ordered locus">Acel_1344</name>
</gene>
<protein>
    <recommendedName>
        <fullName evidence="1">Holliday junction branch migration complex subunit RuvA</fullName>
    </recommendedName>
</protein>
<organism>
    <name type="scientific">Acidothermus cellulolyticus (strain ATCC 43068 / DSM 8971 / 11B)</name>
    <dbReference type="NCBI Taxonomy" id="351607"/>
    <lineage>
        <taxon>Bacteria</taxon>
        <taxon>Bacillati</taxon>
        <taxon>Actinomycetota</taxon>
        <taxon>Actinomycetes</taxon>
        <taxon>Acidothermales</taxon>
        <taxon>Acidothermaceae</taxon>
        <taxon>Acidothermus</taxon>
    </lineage>
</organism>
<comment type="function">
    <text evidence="1">The RuvA-RuvB-RuvC complex processes Holliday junction (HJ) DNA during genetic recombination and DNA repair, while the RuvA-RuvB complex plays an important role in the rescue of blocked DNA replication forks via replication fork reversal (RFR). RuvA specifically binds to HJ cruciform DNA, conferring on it an open structure. The RuvB hexamer acts as an ATP-dependent pump, pulling dsDNA into and through the RuvAB complex. HJ branch migration allows RuvC to scan DNA until it finds its consensus sequence, where it cleaves and resolves the cruciform DNA.</text>
</comment>
<comment type="subunit">
    <text evidence="1">Homotetramer. Forms an RuvA(8)-RuvB(12)-Holliday junction (HJ) complex. HJ DNA is sandwiched between 2 RuvA tetramers; dsDNA enters through RuvA and exits via RuvB. An RuvB hexamer assembles on each DNA strand where it exits the tetramer. Each RuvB hexamer is contacted by two RuvA subunits (via domain III) on 2 adjacent RuvB subunits; this complex drives branch migration. In the full resolvosome a probable DNA-RuvA(4)-RuvB(12)-RuvC(2) complex forms which resolves the HJ.</text>
</comment>
<comment type="subcellular location">
    <subcellularLocation>
        <location evidence="1">Cytoplasm</location>
    </subcellularLocation>
</comment>
<comment type="domain">
    <text evidence="1">Has three domains with a flexible linker between the domains II and III and assumes an 'L' shape. Domain III is highly mobile and contacts RuvB.</text>
</comment>
<comment type="similarity">
    <text evidence="1">Belongs to the RuvA family.</text>
</comment>
<dbReference type="EMBL" id="CP000481">
    <property type="protein sequence ID" value="ABK53116.1"/>
    <property type="molecule type" value="Genomic_DNA"/>
</dbReference>
<dbReference type="RefSeq" id="WP_011720179.1">
    <property type="nucleotide sequence ID" value="NC_008578.1"/>
</dbReference>
<dbReference type="SMR" id="A0LUK6"/>
<dbReference type="FunCoup" id="A0LUK6">
    <property type="interactions" value="46"/>
</dbReference>
<dbReference type="STRING" id="351607.Acel_1344"/>
<dbReference type="KEGG" id="ace:Acel_1344"/>
<dbReference type="eggNOG" id="COG0632">
    <property type="taxonomic scope" value="Bacteria"/>
</dbReference>
<dbReference type="HOGENOM" id="CLU_087936_2_1_11"/>
<dbReference type="InParanoid" id="A0LUK6"/>
<dbReference type="OrthoDB" id="5293449at2"/>
<dbReference type="Proteomes" id="UP000008221">
    <property type="component" value="Chromosome"/>
</dbReference>
<dbReference type="GO" id="GO:0005737">
    <property type="term" value="C:cytoplasm"/>
    <property type="evidence" value="ECO:0007669"/>
    <property type="project" value="UniProtKB-SubCell"/>
</dbReference>
<dbReference type="GO" id="GO:0009379">
    <property type="term" value="C:Holliday junction helicase complex"/>
    <property type="evidence" value="ECO:0007669"/>
    <property type="project" value="InterPro"/>
</dbReference>
<dbReference type="GO" id="GO:0048476">
    <property type="term" value="C:Holliday junction resolvase complex"/>
    <property type="evidence" value="ECO:0007669"/>
    <property type="project" value="UniProtKB-UniRule"/>
</dbReference>
<dbReference type="GO" id="GO:0005524">
    <property type="term" value="F:ATP binding"/>
    <property type="evidence" value="ECO:0007669"/>
    <property type="project" value="InterPro"/>
</dbReference>
<dbReference type="GO" id="GO:0000400">
    <property type="term" value="F:four-way junction DNA binding"/>
    <property type="evidence" value="ECO:0007669"/>
    <property type="project" value="UniProtKB-UniRule"/>
</dbReference>
<dbReference type="GO" id="GO:0009378">
    <property type="term" value="F:four-way junction helicase activity"/>
    <property type="evidence" value="ECO:0007669"/>
    <property type="project" value="InterPro"/>
</dbReference>
<dbReference type="GO" id="GO:0006310">
    <property type="term" value="P:DNA recombination"/>
    <property type="evidence" value="ECO:0007669"/>
    <property type="project" value="UniProtKB-UniRule"/>
</dbReference>
<dbReference type="GO" id="GO:0006281">
    <property type="term" value="P:DNA repair"/>
    <property type="evidence" value="ECO:0007669"/>
    <property type="project" value="UniProtKB-UniRule"/>
</dbReference>
<dbReference type="CDD" id="cd14332">
    <property type="entry name" value="UBA_RuvA_C"/>
    <property type="match status" value="1"/>
</dbReference>
<dbReference type="Gene3D" id="1.10.150.20">
    <property type="entry name" value="5' to 3' exonuclease, C-terminal subdomain"/>
    <property type="match status" value="1"/>
</dbReference>
<dbReference type="Gene3D" id="1.10.8.10">
    <property type="entry name" value="DNA helicase RuvA subunit, C-terminal domain"/>
    <property type="match status" value="1"/>
</dbReference>
<dbReference type="Gene3D" id="2.40.50.140">
    <property type="entry name" value="Nucleic acid-binding proteins"/>
    <property type="match status" value="1"/>
</dbReference>
<dbReference type="HAMAP" id="MF_00031">
    <property type="entry name" value="DNA_HJ_migration_RuvA"/>
    <property type="match status" value="1"/>
</dbReference>
<dbReference type="InterPro" id="IPR013849">
    <property type="entry name" value="DNA_helicase_Holl-junc_RuvA_I"/>
</dbReference>
<dbReference type="InterPro" id="IPR003583">
    <property type="entry name" value="Hlx-hairpin-Hlx_DNA-bd_motif"/>
</dbReference>
<dbReference type="InterPro" id="IPR012340">
    <property type="entry name" value="NA-bd_OB-fold"/>
</dbReference>
<dbReference type="InterPro" id="IPR000085">
    <property type="entry name" value="RuvA"/>
</dbReference>
<dbReference type="InterPro" id="IPR010994">
    <property type="entry name" value="RuvA_2-like"/>
</dbReference>
<dbReference type="InterPro" id="IPR011114">
    <property type="entry name" value="RuvA_C"/>
</dbReference>
<dbReference type="InterPro" id="IPR036267">
    <property type="entry name" value="RuvA_C_sf"/>
</dbReference>
<dbReference type="NCBIfam" id="TIGR00084">
    <property type="entry name" value="ruvA"/>
    <property type="match status" value="1"/>
</dbReference>
<dbReference type="Pfam" id="PF14520">
    <property type="entry name" value="HHH_5"/>
    <property type="match status" value="1"/>
</dbReference>
<dbReference type="Pfam" id="PF07499">
    <property type="entry name" value="RuvA_C"/>
    <property type="match status" value="1"/>
</dbReference>
<dbReference type="Pfam" id="PF01330">
    <property type="entry name" value="RuvA_N"/>
    <property type="match status" value="1"/>
</dbReference>
<dbReference type="SMART" id="SM00278">
    <property type="entry name" value="HhH1"/>
    <property type="match status" value="2"/>
</dbReference>
<dbReference type="SUPFAM" id="SSF46929">
    <property type="entry name" value="DNA helicase RuvA subunit, C-terminal domain"/>
    <property type="match status" value="1"/>
</dbReference>
<dbReference type="SUPFAM" id="SSF50249">
    <property type="entry name" value="Nucleic acid-binding proteins"/>
    <property type="match status" value="1"/>
</dbReference>
<dbReference type="SUPFAM" id="SSF47781">
    <property type="entry name" value="RuvA domain 2-like"/>
    <property type="match status" value="1"/>
</dbReference>
<accession>A0LUK6</accession>
<keyword id="KW-0963">Cytoplasm</keyword>
<keyword id="KW-0227">DNA damage</keyword>
<keyword id="KW-0233">DNA recombination</keyword>
<keyword id="KW-0234">DNA repair</keyword>
<keyword id="KW-0238">DNA-binding</keyword>
<keyword id="KW-1185">Reference proteome</keyword>
<name>RUVA_ACIC1</name>
<sequence length="196" mass="20347">MISFVSGRVAAVTPDSVIVEVGGFGVQLLATPATIARARVGERARFATSLVVREDSLTLYGFADDDERTVFELLQTASGVGPRLALAMLGVHSPTALRAAVATEDVKALALVPGIGRKTAQRIILELKDRLGTPSTAAAESTSGWRDAVHAGLLNLGYTARQADEAIAAIAGELDDSAAVDTATALRLALATLKRP</sequence>
<reference key="1">
    <citation type="journal article" date="2009" name="Genome Res.">
        <title>Complete genome of the cellulolytic thermophile Acidothermus cellulolyticus 11B provides insights into its ecophysiological and evolutionary adaptations.</title>
        <authorList>
            <person name="Barabote R.D."/>
            <person name="Xie G."/>
            <person name="Leu D.H."/>
            <person name="Normand P."/>
            <person name="Necsulea A."/>
            <person name="Daubin V."/>
            <person name="Medigue C."/>
            <person name="Adney W.S."/>
            <person name="Xu X.C."/>
            <person name="Lapidus A."/>
            <person name="Parales R.E."/>
            <person name="Detter C."/>
            <person name="Pujic P."/>
            <person name="Bruce D."/>
            <person name="Lavire C."/>
            <person name="Challacombe J.F."/>
            <person name="Brettin T.S."/>
            <person name="Berry A.M."/>
        </authorList>
    </citation>
    <scope>NUCLEOTIDE SEQUENCE [LARGE SCALE GENOMIC DNA]</scope>
    <source>
        <strain>ATCC 43068 / DSM 8971 / 11B</strain>
    </source>
</reference>
<proteinExistence type="inferred from homology"/>